<organism>
    <name type="scientific">Mycobacterium bovis (strain BCG / Tokyo 172 / ATCC 35737 / TMC 1019)</name>
    <dbReference type="NCBI Taxonomy" id="561275"/>
    <lineage>
        <taxon>Bacteria</taxon>
        <taxon>Bacillati</taxon>
        <taxon>Actinomycetota</taxon>
        <taxon>Actinomycetes</taxon>
        <taxon>Mycobacteriales</taxon>
        <taxon>Mycobacteriaceae</taxon>
        <taxon>Mycobacterium</taxon>
        <taxon>Mycobacterium tuberculosis complex</taxon>
    </lineage>
</organism>
<reference key="1">
    <citation type="journal article" date="2009" name="Vaccine">
        <title>Whole genome sequence analysis of Mycobacterium bovis bacillus Calmette-Guerin (BCG) Tokyo 172: a comparative study of BCG vaccine substrains.</title>
        <authorList>
            <person name="Seki M."/>
            <person name="Honda I."/>
            <person name="Fujita I."/>
            <person name="Yano I."/>
            <person name="Yamamoto S."/>
            <person name="Koyama A."/>
        </authorList>
    </citation>
    <scope>NUCLEOTIDE SEQUENCE [LARGE SCALE GENOMIC DNA]</scope>
    <source>
        <strain>BCG / Tokyo 172 / ATCC 35737 / TMC 1019</strain>
    </source>
</reference>
<accession>C1AKJ0</accession>
<name>HEM3_MYCBT</name>
<dbReference type="EC" id="2.5.1.61" evidence="1"/>
<dbReference type="EMBL" id="AP010918">
    <property type="protein sequence ID" value="BAH24819.1"/>
    <property type="molecule type" value="Genomic_DNA"/>
</dbReference>
<dbReference type="RefSeq" id="WP_003402702.1">
    <property type="nucleotide sequence ID" value="NZ_CP014566.1"/>
</dbReference>
<dbReference type="SMR" id="C1AKJ0"/>
<dbReference type="KEGG" id="mbt:JTY_0523"/>
<dbReference type="HOGENOM" id="CLU_019704_1_0_11"/>
<dbReference type="UniPathway" id="UPA00251">
    <property type="reaction ID" value="UER00319"/>
</dbReference>
<dbReference type="GO" id="GO:0005737">
    <property type="term" value="C:cytoplasm"/>
    <property type="evidence" value="ECO:0007669"/>
    <property type="project" value="TreeGrafter"/>
</dbReference>
<dbReference type="GO" id="GO:0004418">
    <property type="term" value="F:hydroxymethylbilane synthase activity"/>
    <property type="evidence" value="ECO:0007669"/>
    <property type="project" value="UniProtKB-UniRule"/>
</dbReference>
<dbReference type="GO" id="GO:0006782">
    <property type="term" value="P:protoporphyrinogen IX biosynthetic process"/>
    <property type="evidence" value="ECO:0007669"/>
    <property type="project" value="UniProtKB-UniRule"/>
</dbReference>
<dbReference type="CDD" id="cd13646">
    <property type="entry name" value="PBP2_EcHMBS_like"/>
    <property type="match status" value="1"/>
</dbReference>
<dbReference type="FunFam" id="3.30.160.40:FF:000001">
    <property type="entry name" value="Porphobilinogen deaminase"/>
    <property type="match status" value="1"/>
</dbReference>
<dbReference type="FunFam" id="3.40.190.10:FF:000005">
    <property type="entry name" value="Porphobilinogen deaminase"/>
    <property type="match status" value="1"/>
</dbReference>
<dbReference type="Gene3D" id="3.40.190.10">
    <property type="entry name" value="Periplasmic binding protein-like II"/>
    <property type="match status" value="2"/>
</dbReference>
<dbReference type="Gene3D" id="3.30.160.40">
    <property type="entry name" value="Porphobilinogen deaminase, C-terminal domain"/>
    <property type="match status" value="1"/>
</dbReference>
<dbReference type="HAMAP" id="MF_00260">
    <property type="entry name" value="Porphobil_deam"/>
    <property type="match status" value="1"/>
</dbReference>
<dbReference type="InterPro" id="IPR000860">
    <property type="entry name" value="HemC"/>
</dbReference>
<dbReference type="InterPro" id="IPR022419">
    <property type="entry name" value="Porphobilin_deaminase_cofac_BS"/>
</dbReference>
<dbReference type="InterPro" id="IPR022417">
    <property type="entry name" value="Porphobilin_deaminase_N"/>
</dbReference>
<dbReference type="InterPro" id="IPR022418">
    <property type="entry name" value="Porphobilinogen_deaminase_C"/>
</dbReference>
<dbReference type="InterPro" id="IPR036803">
    <property type="entry name" value="Porphobilinogen_deaminase_C_sf"/>
</dbReference>
<dbReference type="NCBIfam" id="TIGR00212">
    <property type="entry name" value="hemC"/>
    <property type="match status" value="1"/>
</dbReference>
<dbReference type="PANTHER" id="PTHR11557">
    <property type="entry name" value="PORPHOBILINOGEN DEAMINASE"/>
    <property type="match status" value="1"/>
</dbReference>
<dbReference type="PANTHER" id="PTHR11557:SF0">
    <property type="entry name" value="PORPHOBILINOGEN DEAMINASE"/>
    <property type="match status" value="1"/>
</dbReference>
<dbReference type="Pfam" id="PF01379">
    <property type="entry name" value="Porphobil_deam"/>
    <property type="match status" value="1"/>
</dbReference>
<dbReference type="Pfam" id="PF03900">
    <property type="entry name" value="Porphobil_deamC"/>
    <property type="match status" value="1"/>
</dbReference>
<dbReference type="PIRSF" id="PIRSF001438">
    <property type="entry name" value="4pyrrol_synth_OHMeBilane_synth"/>
    <property type="match status" value="1"/>
</dbReference>
<dbReference type="PRINTS" id="PR00151">
    <property type="entry name" value="PORPHBDMNASE"/>
</dbReference>
<dbReference type="SUPFAM" id="SSF53850">
    <property type="entry name" value="Periplasmic binding protein-like II"/>
    <property type="match status" value="1"/>
</dbReference>
<dbReference type="SUPFAM" id="SSF54782">
    <property type="entry name" value="Porphobilinogen deaminase (hydroxymethylbilane synthase), C-terminal domain"/>
    <property type="match status" value="1"/>
</dbReference>
<dbReference type="PROSITE" id="PS00533">
    <property type="entry name" value="PORPHOBILINOGEN_DEAM"/>
    <property type="match status" value="1"/>
</dbReference>
<evidence type="ECO:0000255" key="1">
    <source>
        <dbReference type="HAMAP-Rule" id="MF_00260"/>
    </source>
</evidence>
<feature type="chain" id="PRO_1000125677" description="Porphobilinogen deaminase">
    <location>
        <begin position="1"/>
        <end position="309"/>
    </location>
</feature>
<feature type="modified residue" description="S-(dipyrrolylmethanemethyl)cysteine" evidence="1">
    <location>
        <position position="234"/>
    </location>
</feature>
<gene>
    <name evidence="1" type="primary">hemC</name>
    <name type="ordered locus">JTY_0523</name>
</gene>
<comment type="function">
    <text evidence="1">Tetrapolymerization of the monopyrrole PBG into the hydroxymethylbilane pre-uroporphyrinogen in several discrete steps.</text>
</comment>
<comment type="catalytic activity">
    <reaction evidence="1">
        <text>4 porphobilinogen + H2O = hydroxymethylbilane + 4 NH4(+)</text>
        <dbReference type="Rhea" id="RHEA:13185"/>
        <dbReference type="ChEBI" id="CHEBI:15377"/>
        <dbReference type="ChEBI" id="CHEBI:28938"/>
        <dbReference type="ChEBI" id="CHEBI:57845"/>
        <dbReference type="ChEBI" id="CHEBI:58126"/>
        <dbReference type="EC" id="2.5.1.61"/>
    </reaction>
</comment>
<comment type="cofactor">
    <cofactor evidence="1">
        <name>dipyrromethane</name>
        <dbReference type="ChEBI" id="CHEBI:60342"/>
    </cofactor>
    <text evidence="1">Binds 1 dipyrromethane group covalently.</text>
</comment>
<comment type="pathway">
    <text evidence="1">Porphyrin-containing compound metabolism; protoporphyrin-IX biosynthesis; coproporphyrinogen-III from 5-aminolevulinate: step 2/4.</text>
</comment>
<comment type="subunit">
    <text evidence="1">Monomer.</text>
</comment>
<comment type="miscellaneous">
    <text evidence="1">The porphobilinogen subunits are added to the dipyrromethane group.</text>
</comment>
<comment type="similarity">
    <text evidence="1">Belongs to the HMBS family.</text>
</comment>
<sequence length="309" mass="31938">MIRIGTRGSLLATTQAATVRDALIAGGHSAELVTISTEGDRSMAPIASLGVGVFTTALREAMEAGLVDAAVHSYKDLPTAADPRFTVAAIPPRNDPRDAVVARDGLTLGELPVGSLVGTSSPRRAAQLRALGLGLEIRPLRGNLDTRLNKVSSGDLDAIVVARAGLARLGRLDDVTETLEPVQMLPAPAQGALAVECRAGDSRLVAVLAELDDADTRAAVTAERALLADLEAGCSAPVGAIAEVVESIDEDGRVFEELSLRGCVAALDGSDVIRASGIGSCGRARELGLSVAAELFELGARELMWGVRH</sequence>
<protein>
    <recommendedName>
        <fullName evidence="1">Porphobilinogen deaminase</fullName>
        <shortName evidence="1">PBG</shortName>
        <ecNumber evidence="1">2.5.1.61</ecNumber>
    </recommendedName>
    <alternativeName>
        <fullName evidence="1">Hydroxymethylbilane synthase</fullName>
        <shortName evidence="1">HMBS</shortName>
    </alternativeName>
    <alternativeName>
        <fullName evidence="1">Pre-uroporphyrinogen synthase</fullName>
    </alternativeName>
</protein>
<proteinExistence type="inferred from homology"/>
<keyword id="KW-0627">Porphyrin biosynthesis</keyword>
<keyword id="KW-0808">Transferase</keyword>